<keyword id="KW-0539">Nucleus</keyword>
<keyword id="KW-1185">Reference proteome</keyword>
<keyword id="KW-0687">Ribonucleoprotein</keyword>
<keyword id="KW-0690">Ribosome biogenesis</keyword>
<keyword id="KW-0698">rRNA processing</keyword>
<reference key="1">
    <citation type="journal article" date="2008" name="PLoS Genet.">
        <title>Genomic islands in the pathogenic filamentous fungus Aspergillus fumigatus.</title>
        <authorList>
            <person name="Fedorova N.D."/>
            <person name="Khaldi N."/>
            <person name="Joardar V.S."/>
            <person name="Maiti R."/>
            <person name="Amedeo P."/>
            <person name="Anderson M.J."/>
            <person name="Crabtree J."/>
            <person name="Silva J.C."/>
            <person name="Badger J.H."/>
            <person name="Albarraq A."/>
            <person name="Angiuoli S."/>
            <person name="Bussey H."/>
            <person name="Bowyer P."/>
            <person name="Cotty P.J."/>
            <person name="Dyer P.S."/>
            <person name="Egan A."/>
            <person name="Galens K."/>
            <person name="Fraser-Liggett C.M."/>
            <person name="Haas B.J."/>
            <person name="Inman J.M."/>
            <person name="Kent R."/>
            <person name="Lemieux S."/>
            <person name="Malavazi I."/>
            <person name="Orvis J."/>
            <person name="Roemer T."/>
            <person name="Ronning C.M."/>
            <person name="Sundaram J.P."/>
            <person name="Sutton G."/>
            <person name="Turner G."/>
            <person name="Venter J.C."/>
            <person name="White O.R."/>
            <person name="Whitty B.R."/>
            <person name="Youngman P."/>
            <person name="Wolfe K.H."/>
            <person name="Goldman G.H."/>
            <person name="Wortman J.R."/>
            <person name="Jiang B."/>
            <person name="Denning D.W."/>
            <person name="Nierman W.C."/>
        </authorList>
    </citation>
    <scope>NUCLEOTIDE SEQUENCE [LARGE SCALE GENOMIC DNA]</scope>
    <source>
        <strain>ATCC 1007 / CBS 513.65 / DSM 816 / NCTC 3887 / NRRL 1 / QM 1276 / 107</strain>
    </source>
</reference>
<accession>A1CQH8</accession>
<feature type="chain" id="PRO_0000408100" description="U3 small nucleolar RNA-associated protein 25">
    <location>
        <begin position="1"/>
        <end position="693"/>
    </location>
</feature>
<feature type="region of interest" description="Disordered" evidence="2">
    <location>
        <begin position="1"/>
        <end position="133"/>
    </location>
</feature>
<feature type="compositionally biased region" description="Acidic residues" evidence="2">
    <location>
        <begin position="15"/>
        <end position="54"/>
    </location>
</feature>
<feature type="compositionally biased region" description="Basic and acidic residues" evidence="2">
    <location>
        <begin position="84"/>
        <end position="93"/>
    </location>
</feature>
<feature type="compositionally biased region" description="Acidic residues" evidence="2">
    <location>
        <begin position="97"/>
        <end position="131"/>
    </location>
</feature>
<evidence type="ECO:0000250" key="1"/>
<evidence type="ECO:0000256" key="2">
    <source>
        <dbReference type="SAM" id="MobiDB-lite"/>
    </source>
</evidence>
<evidence type="ECO:0000305" key="3"/>
<gene>
    <name type="primary">utp25</name>
    <name type="ORF">ACLA_026160</name>
</gene>
<comment type="function">
    <text evidence="1">DEAD-box RNA helicase-like protein required for pre-18S rRNA processing, specifically at sites A0, A1, and A2.</text>
</comment>
<comment type="subunit">
    <text evidence="1">Component of the ribosomal small subunit (SSU) processome composed of at least 40 protein subunits and snoRNA U3.</text>
</comment>
<comment type="subcellular location">
    <subcellularLocation>
        <location evidence="1">Nucleus</location>
        <location evidence="1">Nucleolus</location>
    </subcellularLocation>
</comment>
<comment type="similarity">
    <text evidence="3">Belongs to the UTP25 family.</text>
</comment>
<sequence length="693" mass="78585">MKRKNGFPSSRVEDIESDDFSEDGVGDDRQFEDDDMVDEAPEDDVSSESDDEEQQTGRPYNELLQLLQANTESKGPARKKRKVEHNGGEKEDALPPAEDDLEEPESSDEEEDLVEEVDDQDESDDEEDANDPFDTHFSMVEESELSNAVKAASDKKWKSTKKETASGLKLVRSIPDTGEGDASLLPPLKNFSSVKLKKKLDGPAADLIPAMSDDAQQLAPYIFGYQDVLHGARNTSNSATLRDLLAIHATNHVLKTRDRVLKNNARVAKEQDADLDLRDQGFTRPKVLYLLPTRQACVRVVDSITRCFQPEQQENKKRLLDTFSRPDDKSWETKPEDFRELFGGNDDDMFRLGLKFTRKTIKYFAQFYNSDMILASPLGLRTIMDQADAKKRDHDFLSSIEVVIVDHADALLMQNWDHIDYILNHLNLQPRQAHGCDFSRVRTWYLDNQARSVRQMIMTTAFITPEMNSVFSTHMQNYAGKIKATPVYAGAISEVPLPVSVKQTFSRFDSLTPTKDPDARFKHFTTTVLSSLVRNITSSRDKSSVGGTLIFIPSYLDFVRVRNHFATSAQTTNVSFGAISEYTDVREMSRARTHFMNGRHSVLLYTERLHHFRRYRIRGVKRIVMYGMPENPLFWGEIVSFLGLDEAGVVEAAEGGVRALFSKWDALKLERIVGTKRVGNMLREKGGDTFTFV</sequence>
<name>UTP25_ASPCL</name>
<organism>
    <name type="scientific">Aspergillus clavatus (strain ATCC 1007 / CBS 513.65 / DSM 816 / NCTC 3887 / NRRL 1 / QM 1276 / 107)</name>
    <dbReference type="NCBI Taxonomy" id="344612"/>
    <lineage>
        <taxon>Eukaryota</taxon>
        <taxon>Fungi</taxon>
        <taxon>Dikarya</taxon>
        <taxon>Ascomycota</taxon>
        <taxon>Pezizomycotina</taxon>
        <taxon>Eurotiomycetes</taxon>
        <taxon>Eurotiomycetidae</taxon>
        <taxon>Eurotiales</taxon>
        <taxon>Aspergillaceae</taxon>
        <taxon>Aspergillus</taxon>
        <taxon>Aspergillus subgen. Fumigati</taxon>
    </lineage>
</organism>
<proteinExistence type="inferred from homology"/>
<protein>
    <recommendedName>
        <fullName>U3 small nucleolar RNA-associated protein 25</fullName>
        <shortName>U3 snoRNA-associated protein 25</shortName>
    </recommendedName>
    <alternativeName>
        <fullName>U three protein 25</fullName>
    </alternativeName>
</protein>
<dbReference type="EMBL" id="DS027059">
    <property type="protein sequence ID" value="EAW07899.1"/>
    <property type="molecule type" value="Genomic_DNA"/>
</dbReference>
<dbReference type="RefSeq" id="XP_001269325.1">
    <property type="nucleotide sequence ID" value="XM_001269324.1"/>
</dbReference>
<dbReference type="STRING" id="344612.A1CQH8"/>
<dbReference type="EnsemblFungi" id="EAW07899">
    <property type="protein sequence ID" value="EAW07899"/>
    <property type="gene ID" value="ACLA_026160"/>
</dbReference>
<dbReference type="GeneID" id="4702038"/>
<dbReference type="KEGG" id="act:ACLA_026160"/>
<dbReference type="VEuPathDB" id="FungiDB:ACLA_026160"/>
<dbReference type="eggNOG" id="KOG2340">
    <property type="taxonomic scope" value="Eukaryota"/>
</dbReference>
<dbReference type="HOGENOM" id="CLU_018705_0_1_1"/>
<dbReference type="OMA" id="QDRGDTF"/>
<dbReference type="OrthoDB" id="10264378at2759"/>
<dbReference type="Proteomes" id="UP000006701">
    <property type="component" value="Unassembled WGS sequence"/>
</dbReference>
<dbReference type="GO" id="GO:0005730">
    <property type="term" value="C:nucleolus"/>
    <property type="evidence" value="ECO:0007669"/>
    <property type="project" value="UniProtKB-SubCell"/>
</dbReference>
<dbReference type="GO" id="GO:0032040">
    <property type="term" value="C:small-subunit processome"/>
    <property type="evidence" value="ECO:0007669"/>
    <property type="project" value="EnsemblFungi"/>
</dbReference>
<dbReference type="GO" id="GO:0019843">
    <property type="term" value="F:rRNA binding"/>
    <property type="evidence" value="ECO:0007669"/>
    <property type="project" value="EnsemblFungi"/>
</dbReference>
<dbReference type="GO" id="GO:0034511">
    <property type="term" value="F:U3 snoRNA binding"/>
    <property type="evidence" value="ECO:0007669"/>
    <property type="project" value="EnsemblFungi"/>
</dbReference>
<dbReference type="GO" id="GO:0000462">
    <property type="term" value="P:maturation of SSU-rRNA from tricistronic rRNA transcript (SSU-rRNA, 5.8S rRNA, LSU-rRNA)"/>
    <property type="evidence" value="ECO:0007669"/>
    <property type="project" value="EnsemblFungi"/>
</dbReference>
<dbReference type="FunFam" id="3.40.50.300:FF:002356">
    <property type="entry name" value="U3 small nucleolar RNA-associated protein 25"/>
    <property type="match status" value="1"/>
</dbReference>
<dbReference type="Gene3D" id="3.40.50.300">
    <property type="entry name" value="P-loop containing nucleotide triphosphate hydrolases"/>
    <property type="match status" value="1"/>
</dbReference>
<dbReference type="InterPro" id="IPR027417">
    <property type="entry name" value="P-loop_NTPase"/>
</dbReference>
<dbReference type="InterPro" id="IPR010678">
    <property type="entry name" value="UTP25"/>
</dbReference>
<dbReference type="InterPro" id="IPR053939">
    <property type="entry name" value="UTP25_C"/>
</dbReference>
<dbReference type="InterPro" id="IPR053940">
    <property type="entry name" value="UTP25_NTPase-like"/>
</dbReference>
<dbReference type="PANTHER" id="PTHR12933">
    <property type="entry name" value="ORF PROTEIN-RELATED"/>
    <property type="match status" value="1"/>
</dbReference>
<dbReference type="PANTHER" id="PTHR12933:SF0">
    <property type="entry name" value="U3 SMALL NUCLEOLAR RNA-ASSOCIATED PROTEIN 25 HOMOLOG"/>
    <property type="match status" value="1"/>
</dbReference>
<dbReference type="Pfam" id="PF06862">
    <property type="entry name" value="Utp25_C"/>
    <property type="match status" value="1"/>
</dbReference>
<dbReference type="Pfam" id="PF22916">
    <property type="entry name" value="UTP25_NTPase-like"/>
    <property type="match status" value="1"/>
</dbReference>
<dbReference type="SUPFAM" id="SSF52540">
    <property type="entry name" value="P-loop containing nucleoside triphosphate hydrolases"/>
    <property type="match status" value="1"/>
</dbReference>